<name>CYB_EPTBU</name>
<organism>
    <name type="scientific">Eptatretus burgeri</name>
    <name type="common">Inshore hagfish</name>
    <dbReference type="NCBI Taxonomy" id="7764"/>
    <lineage>
        <taxon>Eukaryota</taxon>
        <taxon>Metazoa</taxon>
        <taxon>Chordata</taxon>
        <taxon>Craniata</taxon>
        <taxon>Vertebrata</taxon>
        <taxon>Cyclostomata</taxon>
        <taxon>Myxini</taxon>
        <taxon>Myxiniformes</taxon>
        <taxon>Myxinidae</taxon>
        <taxon>Eptatretinae</taxon>
        <taxon>Eptatretus</taxon>
    </lineage>
</organism>
<keyword id="KW-0249">Electron transport</keyword>
<keyword id="KW-0349">Heme</keyword>
<keyword id="KW-0408">Iron</keyword>
<keyword id="KW-0472">Membrane</keyword>
<keyword id="KW-0479">Metal-binding</keyword>
<keyword id="KW-0496">Mitochondrion</keyword>
<keyword id="KW-0999">Mitochondrion inner membrane</keyword>
<keyword id="KW-1185">Reference proteome</keyword>
<keyword id="KW-0679">Respiratory chain</keyword>
<keyword id="KW-0812">Transmembrane</keyword>
<keyword id="KW-1133">Transmembrane helix</keyword>
<keyword id="KW-0813">Transport</keyword>
<keyword id="KW-0830">Ubiquinone</keyword>
<reference key="1">
    <citation type="submission" date="2000-06" db="EMBL/GenBank/DDBJ databases">
        <title>Phylogenetic resolution of cyclostomes using the mitochondrial DNA sequence of the hagfish Eptatretus burgeri.</title>
        <authorList>
            <person name="Delarbre C."/>
            <person name="Gallut C."/>
            <person name="Barriel V."/>
            <person name="Janvier P."/>
            <person name="Gachelin G."/>
        </authorList>
    </citation>
    <scope>NUCLEOTIDE SEQUENCE [GENOMIC DNA]</scope>
</reference>
<geneLocation type="mitochondrion"/>
<proteinExistence type="inferred from homology"/>
<accession>Q94ZD1</accession>
<comment type="function">
    <text evidence="2">Component of the ubiquinol-cytochrome c reductase complex (complex III or cytochrome b-c1 complex) that is part of the mitochondrial respiratory chain. The b-c1 complex mediates electron transfer from ubiquinol to cytochrome c. Contributes to the generation of a proton gradient across the mitochondrial membrane that is then used for ATP synthesis.</text>
</comment>
<comment type="cofactor">
    <cofactor evidence="2">
        <name>heme b</name>
        <dbReference type="ChEBI" id="CHEBI:60344"/>
    </cofactor>
    <text evidence="2">Binds 2 heme b groups non-covalently.</text>
</comment>
<comment type="subunit">
    <text evidence="2">The cytochrome bc1 complex contains 3 respiratory subunits (MT-CYB, CYC1 and UQCRFS1), 2 core proteins (UQCRC1 and UQCRC2) and probably 6 low-molecular weight proteins.</text>
</comment>
<comment type="subcellular location">
    <subcellularLocation>
        <location evidence="2">Mitochondrion inner membrane</location>
        <topology evidence="2">Multi-pass membrane protein</topology>
    </subcellularLocation>
</comment>
<comment type="miscellaneous">
    <text evidence="1">Heme 1 (or BL or b562) is low-potential and absorbs at about 562 nm, and heme 2 (or BH or b566) is high-potential and absorbs at about 566 nm.</text>
</comment>
<comment type="similarity">
    <text evidence="3 4">Belongs to the cytochrome b family.</text>
</comment>
<comment type="caution">
    <text evidence="2">The full-length protein contains only eight transmembrane helices, not nine as predicted by bioinformatics tools.</text>
</comment>
<evidence type="ECO:0000250" key="1"/>
<evidence type="ECO:0000250" key="2">
    <source>
        <dbReference type="UniProtKB" id="P00157"/>
    </source>
</evidence>
<evidence type="ECO:0000255" key="3">
    <source>
        <dbReference type="PROSITE-ProRule" id="PRU00967"/>
    </source>
</evidence>
<evidence type="ECO:0000255" key="4">
    <source>
        <dbReference type="PROSITE-ProRule" id="PRU00968"/>
    </source>
</evidence>
<feature type="chain" id="PRO_0000060935" description="Cytochrome b">
    <location>
        <begin position="1"/>
        <end position="385"/>
    </location>
</feature>
<feature type="transmembrane region" description="Helical" evidence="2">
    <location>
        <begin position="34"/>
        <end position="54"/>
    </location>
</feature>
<feature type="transmembrane region" description="Helical" evidence="2">
    <location>
        <begin position="78"/>
        <end position="99"/>
    </location>
</feature>
<feature type="transmembrane region" description="Helical" evidence="2">
    <location>
        <begin position="114"/>
        <end position="134"/>
    </location>
</feature>
<feature type="transmembrane region" description="Helical" evidence="2">
    <location>
        <begin position="179"/>
        <end position="199"/>
    </location>
</feature>
<feature type="transmembrane region" description="Helical" evidence="2">
    <location>
        <begin position="227"/>
        <end position="247"/>
    </location>
</feature>
<feature type="transmembrane region" description="Helical" evidence="2">
    <location>
        <begin position="289"/>
        <end position="309"/>
    </location>
</feature>
<feature type="transmembrane region" description="Helical" evidence="2">
    <location>
        <begin position="321"/>
        <end position="341"/>
    </location>
</feature>
<feature type="transmembrane region" description="Helical" evidence="2">
    <location>
        <begin position="348"/>
        <end position="368"/>
    </location>
</feature>
<feature type="binding site" description="axial binding residue" evidence="2">
    <location>
        <position position="84"/>
    </location>
    <ligand>
        <name>heme b</name>
        <dbReference type="ChEBI" id="CHEBI:60344"/>
        <label>b562</label>
    </ligand>
    <ligandPart>
        <name>Fe</name>
        <dbReference type="ChEBI" id="CHEBI:18248"/>
    </ligandPart>
</feature>
<feature type="binding site" description="axial binding residue" evidence="2">
    <location>
        <position position="98"/>
    </location>
    <ligand>
        <name>heme b</name>
        <dbReference type="ChEBI" id="CHEBI:60344"/>
        <label>b566</label>
    </ligand>
    <ligandPart>
        <name>Fe</name>
        <dbReference type="ChEBI" id="CHEBI:18248"/>
    </ligandPart>
</feature>
<feature type="binding site" description="axial binding residue" evidence="2">
    <location>
        <position position="183"/>
    </location>
    <ligand>
        <name>heme b</name>
        <dbReference type="ChEBI" id="CHEBI:60344"/>
        <label>b562</label>
    </ligand>
    <ligandPart>
        <name>Fe</name>
        <dbReference type="ChEBI" id="CHEBI:18248"/>
    </ligandPart>
</feature>
<feature type="binding site" description="axial binding residue" evidence="2">
    <location>
        <position position="197"/>
    </location>
    <ligand>
        <name>heme b</name>
        <dbReference type="ChEBI" id="CHEBI:60344"/>
        <label>b566</label>
    </ligand>
    <ligandPart>
        <name>Fe</name>
        <dbReference type="ChEBI" id="CHEBI:18248"/>
    </ligandPart>
</feature>
<feature type="binding site" evidence="2">
    <location>
        <position position="202"/>
    </location>
    <ligand>
        <name>a ubiquinone</name>
        <dbReference type="ChEBI" id="CHEBI:16389"/>
    </ligand>
</feature>
<gene>
    <name type="primary">MT-CYB</name>
    <name type="synonym">COB</name>
    <name type="synonym">CYTB</name>
    <name type="synonym">MTCYB</name>
</gene>
<dbReference type="EMBL" id="AJ278504">
    <property type="protein sequence ID" value="CAC42114.1"/>
    <property type="molecule type" value="Genomic_DNA"/>
</dbReference>
<dbReference type="RefSeq" id="NP_127476.1">
    <property type="nucleotide sequence ID" value="NC_002807.1"/>
</dbReference>
<dbReference type="SMR" id="Q94ZD1"/>
<dbReference type="GeneID" id="803379"/>
<dbReference type="CTD" id="4519"/>
<dbReference type="Proteomes" id="UP000694388">
    <property type="component" value="Unplaced"/>
</dbReference>
<dbReference type="GO" id="GO:0005743">
    <property type="term" value="C:mitochondrial inner membrane"/>
    <property type="evidence" value="ECO:0007669"/>
    <property type="project" value="UniProtKB-SubCell"/>
</dbReference>
<dbReference type="GO" id="GO:0045275">
    <property type="term" value="C:respiratory chain complex III"/>
    <property type="evidence" value="ECO:0007669"/>
    <property type="project" value="InterPro"/>
</dbReference>
<dbReference type="GO" id="GO:0046872">
    <property type="term" value="F:metal ion binding"/>
    <property type="evidence" value="ECO:0007669"/>
    <property type="project" value="UniProtKB-KW"/>
</dbReference>
<dbReference type="GO" id="GO:0008121">
    <property type="term" value="F:ubiquinol-cytochrome-c reductase activity"/>
    <property type="evidence" value="ECO:0007669"/>
    <property type="project" value="InterPro"/>
</dbReference>
<dbReference type="GO" id="GO:0006122">
    <property type="term" value="P:mitochondrial electron transport, ubiquinol to cytochrome c"/>
    <property type="evidence" value="ECO:0007669"/>
    <property type="project" value="TreeGrafter"/>
</dbReference>
<dbReference type="CDD" id="cd00290">
    <property type="entry name" value="cytochrome_b_C"/>
    <property type="match status" value="1"/>
</dbReference>
<dbReference type="CDD" id="cd00284">
    <property type="entry name" value="Cytochrome_b_N"/>
    <property type="match status" value="1"/>
</dbReference>
<dbReference type="Gene3D" id="1.20.810.10">
    <property type="entry name" value="Cytochrome Bc1 Complex, Chain C"/>
    <property type="match status" value="1"/>
</dbReference>
<dbReference type="InterPro" id="IPR005798">
    <property type="entry name" value="Cyt_b/b6_C"/>
</dbReference>
<dbReference type="InterPro" id="IPR036150">
    <property type="entry name" value="Cyt_b/b6_C_sf"/>
</dbReference>
<dbReference type="InterPro" id="IPR005797">
    <property type="entry name" value="Cyt_b/b6_N"/>
</dbReference>
<dbReference type="InterPro" id="IPR027387">
    <property type="entry name" value="Cytb/b6-like_sf"/>
</dbReference>
<dbReference type="InterPro" id="IPR030689">
    <property type="entry name" value="Cytochrome_b"/>
</dbReference>
<dbReference type="InterPro" id="IPR048260">
    <property type="entry name" value="Cytochrome_b_C_euk/bac"/>
</dbReference>
<dbReference type="InterPro" id="IPR048259">
    <property type="entry name" value="Cytochrome_b_N_euk/bac"/>
</dbReference>
<dbReference type="InterPro" id="IPR016174">
    <property type="entry name" value="Di-haem_cyt_TM"/>
</dbReference>
<dbReference type="PANTHER" id="PTHR19271">
    <property type="entry name" value="CYTOCHROME B"/>
    <property type="match status" value="1"/>
</dbReference>
<dbReference type="PANTHER" id="PTHR19271:SF16">
    <property type="entry name" value="CYTOCHROME B"/>
    <property type="match status" value="1"/>
</dbReference>
<dbReference type="Pfam" id="PF00032">
    <property type="entry name" value="Cytochrom_B_C"/>
    <property type="match status" value="1"/>
</dbReference>
<dbReference type="Pfam" id="PF00033">
    <property type="entry name" value="Cytochrome_B"/>
    <property type="match status" value="1"/>
</dbReference>
<dbReference type="PIRSF" id="PIRSF038885">
    <property type="entry name" value="COB"/>
    <property type="match status" value="1"/>
</dbReference>
<dbReference type="SUPFAM" id="SSF81648">
    <property type="entry name" value="a domain/subunit of cytochrome bc1 complex (Ubiquinol-cytochrome c reductase)"/>
    <property type="match status" value="1"/>
</dbReference>
<dbReference type="SUPFAM" id="SSF81342">
    <property type="entry name" value="Transmembrane di-heme cytochromes"/>
    <property type="match status" value="1"/>
</dbReference>
<dbReference type="PROSITE" id="PS51003">
    <property type="entry name" value="CYTB_CTER"/>
    <property type="match status" value="1"/>
</dbReference>
<dbReference type="PROSITE" id="PS51002">
    <property type="entry name" value="CYTB_NTER"/>
    <property type="match status" value="1"/>
</dbReference>
<sequence length="385" mass="43754">MTKIFRKSNPLNKMINSSLIDLPSPSNISYLWNFGSLTGLCLALQIISGLLLTMHFSPSINLAFDSTVHIVRDVYGGWFIRNVHISGASLFFTCMFIHIGRGIYYGSFKNLKTWYSGVILFILSMLTAFLGYVLPWGQMSFWAATVITNLLSAVPMMGGTLVETVWGGYSVGDPTLKRFLVLHFLMPFSMIAVSLIHLVFLHETGSNNPMGINPNMDKIPFHPYLSFKDILGFSFLLTFLITFSLLLPYLTTDPDNFSPANSMVTPPHIKPEWYFLFAYSILRAIPNKLAGIIALVMSLSVLLLMPILIRSNKRSMTFMPLMQVTFWLMVCNFIFLSWLGAMPLEPPFILMSQISSFIYFFIFFVMFPLISRNEDKILEFHAMYS</sequence>
<protein>
    <recommendedName>
        <fullName>Cytochrome b</fullName>
    </recommendedName>
    <alternativeName>
        <fullName>Complex III subunit 3</fullName>
    </alternativeName>
    <alternativeName>
        <fullName>Complex III subunit III</fullName>
    </alternativeName>
    <alternativeName>
        <fullName>Cytochrome b-c1 complex subunit 3</fullName>
    </alternativeName>
    <alternativeName>
        <fullName>Ubiquinol-cytochrome-c reductase complex cytochrome b subunit</fullName>
    </alternativeName>
</protein>